<proteinExistence type="inferred from homology"/>
<sequence length="347" mass="38676">MKEESELARIKSSKAVVSKTIKEGKQGRKIPIWLMRQAGRSLPEYRRAVKDTSSFMEICYNTDLVVELTLQPVARFSMDAAIIFSDILIVADVLGCDVDFIRGVGPTIKPVKNFKELRNPQKIETKTLPILNAIRKVRDKLPEEKSLIGFAGGPWTVASYIIEGRSSKTFSKVLNLHPSSLEQIIEQITEVTISYLVKQIEFGADVIQLFDSNAGVLSGELFEECVIKPTKKIVSAIKGKFPDFPIIGFPKSAGSLYKDYCEKTGVSAVSIDYNVPIEWAKENLKIPLQGNLNPSLLAYNKMEAIKETKRIIDCFRDLPFIFNLGHGVLPNTPIENIAALVDLVKSQ</sequence>
<evidence type="ECO:0000255" key="1">
    <source>
        <dbReference type="HAMAP-Rule" id="MF_00218"/>
    </source>
</evidence>
<protein>
    <recommendedName>
        <fullName evidence="1">Uroporphyrinogen decarboxylase</fullName>
        <shortName evidence="1">UPD</shortName>
        <shortName evidence="1">URO-D</shortName>
        <ecNumber evidence="1">4.1.1.37</ecNumber>
    </recommendedName>
</protein>
<comment type="function">
    <text evidence="1">Catalyzes the decarboxylation of four acetate groups of uroporphyrinogen-III to yield coproporphyrinogen-III.</text>
</comment>
<comment type="catalytic activity">
    <reaction evidence="1">
        <text>uroporphyrinogen III + 4 H(+) = coproporphyrinogen III + 4 CO2</text>
        <dbReference type="Rhea" id="RHEA:19865"/>
        <dbReference type="ChEBI" id="CHEBI:15378"/>
        <dbReference type="ChEBI" id="CHEBI:16526"/>
        <dbReference type="ChEBI" id="CHEBI:57308"/>
        <dbReference type="ChEBI" id="CHEBI:57309"/>
        <dbReference type="EC" id="4.1.1.37"/>
    </reaction>
</comment>
<comment type="pathway">
    <text evidence="1">Porphyrin-containing compound metabolism; protoporphyrin-IX biosynthesis; coproporphyrinogen-III from 5-aminolevulinate: step 4/4.</text>
</comment>
<comment type="subunit">
    <text evidence="1">Homodimer.</text>
</comment>
<comment type="subcellular location">
    <subcellularLocation>
        <location evidence="1">Cytoplasm</location>
    </subcellularLocation>
</comment>
<comment type="similarity">
    <text evidence="1">Belongs to the uroporphyrinogen decarboxylase family.</text>
</comment>
<name>DCUP_WOLTR</name>
<gene>
    <name evidence="1" type="primary">hemE</name>
    <name type="ordered locus">Wbm0001</name>
</gene>
<feature type="chain" id="PRO_0000325710" description="Uroporphyrinogen decarboxylase">
    <location>
        <begin position="1"/>
        <end position="347"/>
    </location>
</feature>
<feature type="binding site" evidence="1">
    <location>
        <begin position="36"/>
        <end position="40"/>
    </location>
    <ligand>
        <name>substrate</name>
    </ligand>
</feature>
<feature type="binding site" evidence="1">
    <location>
        <position position="86"/>
    </location>
    <ligand>
        <name>substrate</name>
    </ligand>
</feature>
<feature type="binding site" evidence="1">
    <location>
        <position position="160"/>
    </location>
    <ligand>
        <name>substrate</name>
    </ligand>
</feature>
<feature type="binding site" evidence="1">
    <location>
        <position position="212"/>
    </location>
    <ligand>
        <name>substrate</name>
    </ligand>
</feature>
<feature type="binding site" evidence="1">
    <location>
        <position position="326"/>
    </location>
    <ligand>
        <name>substrate</name>
    </ligand>
</feature>
<feature type="site" description="Transition state stabilizer" evidence="1">
    <location>
        <position position="86"/>
    </location>
</feature>
<reference key="1">
    <citation type="journal article" date="2005" name="PLoS Biol.">
        <title>The Wolbachia genome of Brugia malayi: endosymbiont evolution within a human pathogenic nematode.</title>
        <authorList>
            <person name="Foster J."/>
            <person name="Ganatra M."/>
            <person name="Kamal I."/>
            <person name="Ware J."/>
            <person name="Makarova K."/>
            <person name="Ivanova N."/>
            <person name="Bhattacharyya A."/>
            <person name="Kapatral V."/>
            <person name="Kumar S."/>
            <person name="Posfai J."/>
            <person name="Vincze T."/>
            <person name="Ingram J."/>
            <person name="Moran L."/>
            <person name="Lapidus A."/>
            <person name="Omelchenko M."/>
            <person name="Kyrpides N."/>
            <person name="Ghedin E."/>
            <person name="Wang S."/>
            <person name="Goltsman E."/>
            <person name="Joukov V."/>
            <person name="Ostrovskaya O."/>
            <person name="Tsukerman K."/>
            <person name="Mazur M."/>
            <person name="Comb D."/>
            <person name="Koonin E."/>
            <person name="Slatko B."/>
        </authorList>
    </citation>
    <scope>NUCLEOTIDE SEQUENCE [LARGE SCALE GENOMIC DNA]</scope>
    <source>
        <strain>TRS</strain>
    </source>
</reference>
<organism>
    <name type="scientific">Wolbachia sp. subsp. Brugia malayi (strain TRS)</name>
    <dbReference type="NCBI Taxonomy" id="292805"/>
    <lineage>
        <taxon>Bacteria</taxon>
        <taxon>Pseudomonadati</taxon>
        <taxon>Pseudomonadota</taxon>
        <taxon>Alphaproteobacteria</taxon>
        <taxon>Rickettsiales</taxon>
        <taxon>Anaplasmataceae</taxon>
        <taxon>Wolbachieae</taxon>
        <taxon>Wolbachia</taxon>
    </lineage>
</organism>
<keyword id="KW-0963">Cytoplasm</keyword>
<keyword id="KW-0210">Decarboxylase</keyword>
<keyword id="KW-0456">Lyase</keyword>
<keyword id="KW-0627">Porphyrin biosynthesis</keyword>
<keyword id="KW-1185">Reference proteome</keyword>
<dbReference type="EC" id="4.1.1.37" evidence="1"/>
<dbReference type="EMBL" id="AE017321">
    <property type="protein sequence ID" value="AAW70593.1"/>
    <property type="molecule type" value="Genomic_DNA"/>
</dbReference>
<dbReference type="RefSeq" id="WP_011256203.1">
    <property type="nucleotide sequence ID" value="NC_006833.1"/>
</dbReference>
<dbReference type="SMR" id="Q5GTT1"/>
<dbReference type="STRING" id="292805.Wbm0001"/>
<dbReference type="KEGG" id="wbm:Wbm0001"/>
<dbReference type="eggNOG" id="COG0407">
    <property type="taxonomic scope" value="Bacteria"/>
</dbReference>
<dbReference type="HOGENOM" id="CLU_040933_0_0_5"/>
<dbReference type="UniPathway" id="UPA00251">
    <property type="reaction ID" value="UER00321"/>
</dbReference>
<dbReference type="Proteomes" id="UP000000534">
    <property type="component" value="Chromosome"/>
</dbReference>
<dbReference type="GO" id="GO:0005829">
    <property type="term" value="C:cytosol"/>
    <property type="evidence" value="ECO:0007669"/>
    <property type="project" value="TreeGrafter"/>
</dbReference>
<dbReference type="GO" id="GO:0004853">
    <property type="term" value="F:uroporphyrinogen decarboxylase activity"/>
    <property type="evidence" value="ECO:0007669"/>
    <property type="project" value="UniProtKB-UniRule"/>
</dbReference>
<dbReference type="GO" id="GO:0006782">
    <property type="term" value="P:protoporphyrinogen IX biosynthetic process"/>
    <property type="evidence" value="ECO:0007669"/>
    <property type="project" value="UniProtKB-UniRule"/>
</dbReference>
<dbReference type="CDD" id="cd00717">
    <property type="entry name" value="URO-D"/>
    <property type="match status" value="1"/>
</dbReference>
<dbReference type="Gene3D" id="3.20.20.210">
    <property type="match status" value="1"/>
</dbReference>
<dbReference type="HAMAP" id="MF_00218">
    <property type="entry name" value="URO_D"/>
    <property type="match status" value="1"/>
</dbReference>
<dbReference type="InterPro" id="IPR038071">
    <property type="entry name" value="UROD/MetE-like_sf"/>
</dbReference>
<dbReference type="InterPro" id="IPR006361">
    <property type="entry name" value="Uroporphyrinogen_deCO2ase_HemE"/>
</dbReference>
<dbReference type="InterPro" id="IPR000257">
    <property type="entry name" value="Uroporphyrinogen_deCOase"/>
</dbReference>
<dbReference type="NCBIfam" id="TIGR01464">
    <property type="entry name" value="hemE"/>
    <property type="match status" value="1"/>
</dbReference>
<dbReference type="PANTHER" id="PTHR21091">
    <property type="entry name" value="METHYLTETRAHYDROFOLATE:HOMOCYSTEINE METHYLTRANSFERASE RELATED"/>
    <property type="match status" value="1"/>
</dbReference>
<dbReference type="PANTHER" id="PTHR21091:SF169">
    <property type="entry name" value="UROPORPHYRINOGEN DECARBOXYLASE"/>
    <property type="match status" value="1"/>
</dbReference>
<dbReference type="Pfam" id="PF01208">
    <property type="entry name" value="URO-D"/>
    <property type="match status" value="1"/>
</dbReference>
<dbReference type="SUPFAM" id="SSF51726">
    <property type="entry name" value="UROD/MetE-like"/>
    <property type="match status" value="1"/>
</dbReference>
<dbReference type="PROSITE" id="PS00906">
    <property type="entry name" value="UROD_1"/>
    <property type="match status" value="1"/>
</dbReference>
<dbReference type="PROSITE" id="PS00907">
    <property type="entry name" value="UROD_2"/>
    <property type="match status" value="1"/>
</dbReference>
<accession>Q5GTT1</accession>